<reference key="1">
    <citation type="journal article" date="2009" name="BMC Evol. Biol.">
        <title>Nucleotide diversity of the Chlamydomonas reinhardtii plastid genome: addressing the mutational-hazard hypothesis.</title>
        <authorList>
            <person name="Smith D.R."/>
            <person name="Lee R.W."/>
        </authorList>
    </citation>
    <scope>NUCLEOTIDE SEQUENCE [LARGE SCALE GENOMIC DNA]</scope>
    <source>
        <strain>CC-503</strain>
    </source>
</reference>
<reference key="2">
    <citation type="journal article" date="2002" name="Plant Cell">
        <title>The Chlamydomonas reinhardtii plastid chromosome: islands of genes in a sea of repeats.</title>
        <authorList>
            <person name="Maul J.E."/>
            <person name="Lilly J.W."/>
            <person name="Cui L."/>
            <person name="dePamphilis C.W."/>
            <person name="Miller W."/>
            <person name="Harris E.H."/>
            <person name="Stern D.B."/>
        </authorList>
    </citation>
    <scope>IDENTIFICATION</scope>
    <scope>COMPLETE PLASTID GENOME</scope>
</reference>
<feature type="chain" id="PRO_0000126315" description="Large ribosomal subunit protein bL36c">
    <location>
        <begin position="1"/>
        <end position="37"/>
    </location>
</feature>
<name>RK36_CHLRE</name>
<evidence type="ECO:0000305" key="1"/>
<dbReference type="EMBL" id="FJ423446">
    <property type="protein sequence ID" value="ACJ50100.1"/>
    <property type="molecule type" value="Genomic_DNA"/>
</dbReference>
<dbReference type="EMBL" id="BK000554">
    <property type="protein sequence ID" value="DAA00913.1"/>
    <property type="molecule type" value="Genomic_DNA"/>
</dbReference>
<dbReference type="RefSeq" id="NP_958367.1">
    <property type="nucleotide sequence ID" value="NC_005353.1"/>
</dbReference>
<dbReference type="SMR" id="P59774"/>
<dbReference type="FunCoup" id="P59774">
    <property type="interactions" value="38"/>
</dbReference>
<dbReference type="STRING" id="3055.P59774"/>
<dbReference type="PaxDb" id="3055-DAA00913"/>
<dbReference type="GeneID" id="2717053"/>
<dbReference type="KEGG" id="cre:ChreCp010"/>
<dbReference type="eggNOG" id="ENOG502SBPU">
    <property type="taxonomic scope" value="Eukaryota"/>
</dbReference>
<dbReference type="HOGENOM" id="CLU_135723_6_2_1"/>
<dbReference type="InParanoid" id="P59774"/>
<dbReference type="Proteomes" id="UP000006906">
    <property type="component" value="Chloroplast"/>
</dbReference>
<dbReference type="GO" id="GO:0009507">
    <property type="term" value="C:chloroplast"/>
    <property type="evidence" value="ECO:0007669"/>
    <property type="project" value="UniProtKB-SubCell"/>
</dbReference>
<dbReference type="GO" id="GO:1990904">
    <property type="term" value="C:ribonucleoprotein complex"/>
    <property type="evidence" value="ECO:0007669"/>
    <property type="project" value="UniProtKB-KW"/>
</dbReference>
<dbReference type="GO" id="GO:0005840">
    <property type="term" value="C:ribosome"/>
    <property type="evidence" value="ECO:0007669"/>
    <property type="project" value="UniProtKB-KW"/>
</dbReference>
<dbReference type="GO" id="GO:0003735">
    <property type="term" value="F:structural constituent of ribosome"/>
    <property type="evidence" value="ECO:0007669"/>
    <property type="project" value="InterPro"/>
</dbReference>
<dbReference type="GO" id="GO:0006412">
    <property type="term" value="P:translation"/>
    <property type="evidence" value="ECO:0007669"/>
    <property type="project" value="UniProtKB-UniRule"/>
</dbReference>
<dbReference type="HAMAP" id="MF_00251">
    <property type="entry name" value="Ribosomal_bL36"/>
    <property type="match status" value="1"/>
</dbReference>
<dbReference type="InterPro" id="IPR000473">
    <property type="entry name" value="Ribosomal_bL36"/>
</dbReference>
<dbReference type="InterPro" id="IPR035977">
    <property type="entry name" value="Ribosomal_bL36_sp"/>
</dbReference>
<dbReference type="NCBIfam" id="TIGR01022">
    <property type="entry name" value="rpmJ_bact"/>
    <property type="match status" value="1"/>
</dbReference>
<dbReference type="PANTHER" id="PTHR42888">
    <property type="entry name" value="50S RIBOSOMAL PROTEIN L36, CHLOROPLASTIC"/>
    <property type="match status" value="1"/>
</dbReference>
<dbReference type="PANTHER" id="PTHR42888:SF1">
    <property type="entry name" value="LARGE RIBOSOMAL SUBUNIT PROTEIN BL36C"/>
    <property type="match status" value="1"/>
</dbReference>
<dbReference type="Pfam" id="PF00444">
    <property type="entry name" value="Ribosomal_L36"/>
    <property type="match status" value="1"/>
</dbReference>
<dbReference type="SUPFAM" id="SSF57840">
    <property type="entry name" value="Ribosomal protein L36"/>
    <property type="match status" value="1"/>
</dbReference>
<dbReference type="PROSITE" id="PS00828">
    <property type="entry name" value="RIBOSOMAL_L36"/>
    <property type="match status" value="1"/>
</dbReference>
<accession>P59774</accession>
<accession>B7U1F3</accession>
<gene>
    <name type="primary">rpl36</name>
</gene>
<comment type="subcellular location">
    <subcellularLocation>
        <location>Plastid</location>
        <location>Chloroplast</location>
    </subcellularLocation>
</comment>
<comment type="similarity">
    <text evidence="1">Belongs to the bacterial ribosomal protein bL36 family.</text>
</comment>
<organism>
    <name type="scientific">Chlamydomonas reinhardtii</name>
    <name type="common">Chlamydomonas smithii</name>
    <dbReference type="NCBI Taxonomy" id="3055"/>
    <lineage>
        <taxon>Eukaryota</taxon>
        <taxon>Viridiplantae</taxon>
        <taxon>Chlorophyta</taxon>
        <taxon>core chlorophytes</taxon>
        <taxon>Chlorophyceae</taxon>
        <taxon>CS clade</taxon>
        <taxon>Chlamydomonadales</taxon>
        <taxon>Chlamydomonadaceae</taxon>
        <taxon>Chlamydomonas</taxon>
    </lineage>
</organism>
<protein>
    <recommendedName>
        <fullName evidence="1">Large ribosomal subunit protein bL36c</fullName>
    </recommendedName>
    <alternativeName>
        <fullName>50S ribosomal protein L36, chloroplastic</fullName>
    </alternativeName>
</protein>
<sequence length="37" mass="4260">MKVRASVKKMCDNCRVIKRKGKVMVICSNAKHKQRQG</sequence>
<proteinExistence type="inferred from homology"/>
<geneLocation type="chloroplast"/>
<keyword id="KW-0150">Chloroplast</keyword>
<keyword id="KW-0934">Plastid</keyword>
<keyword id="KW-1185">Reference proteome</keyword>
<keyword id="KW-0687">Ribonucleoprotein</keyword>
<keyword id="KW-0689">Ribosomal protein</keyword>